<protein>
    <recommendedName>
        <fullName evidence="5">Ferric siderophore reductase</fullName>
        <ecNumber evidence="3">1.16.-.-</ecNumber>
    </recommendedName>
    <alternativeName>
        <fullName evidence="5">SfSIP</fullName>
    </alternativeName>
    <alternativeName>
        <fullName evidence="4">Siderophore-interacting protein</fullName>
        <shortName evidence="4">SIP</shortName>
    </alternativeName>
</protein>
<proteinExistence type="evidence at protein level"/>
<dbReference type="EC" id="1.16.-.-" evidence="3"/>
<dbReference type="EMBL" id="CP000447">
    <property type="protein sequence ID" value="ABI72237.1"/>
    <property type="molecule type" value="Genomic_DNA"/>
</dbReference>
<dbReference type="RefSeq" id="WP_011637846.1">
    <property type="nucleotide sequence ID" value="NC_008345.1"/>
</dbReference>
<dbReference type="PDB" id="6GEH">
    <property type="method" value="X-ray"/>
    <property type="resolution" value="1.15 A"/>
    <property type="chains" value="A=9-264"/>
</dbReference>
<dbReference type="PDBsum" id="6GEH"/>
<dbReference type="SMR" id="Q080S8"/>
<dbReference type="STRING" id="318167.Sfri_2392"/>
<dbReference type="KEGG" id="sfr:Sfri_2392"/>
<dbReference type="eggNOG" id="COG2375">
    <property type="taxonomic scope" value="Bacteria"/>
</dbReference>
<dbReference type="HOGENOM" id="CLU_040923_3_0_6"/>
<dbReference type="OrthoDB" id="9814826at2"/>
<dbReference type="Proteomes" id="UP000000684">
    <property type="component" value="Chromosome"/>
</dbReference>
<dbReference type="GO" id="GO:0046872">
    <property type="term" value="F:metal ion binding"/>
    <property type="evidence" value="ECO:0007669"/>
    <property type="project" value="UniProtKB-KW"/>
</dbReference>
<dbReference type="GO" id="GO:0000166">
    <property type="term" value="F:nucleotide binding"/>
    <property type="evidence" value="ECO:0007669"/>
    <property type="project" value="UniProtKB-KW"/>
</dbReference>
<dbReference type="GO" id="GO:0016491">
    <property type="term" value="F:oxidoreductase activity"/>
    <property type="evidence" value="ECO:0007669"/>
    <property type="project" value="InterPro"/>
</dbReference>
<dbReference type="CDD" id="cd06193">
    <property type="entry name" value="siderophore_interacting"/>
    <property type="match status" value="1"/>
</dbReference>
<dbReference type="Gene3D" id="3.40.50.80">
    <property type="entry name" value="Nucleotide-binding domain of ferredoxin-NADP reductase (FNR) module"/>
    <property type="match status" value="1"/>
</dbReference>
<dbReference type="Gene3D" id="2.40.30.10">
    <property type="entry name" value="Translation factors"/>
    <property type="match status" value="1"/>
</dbReference>
<dbReference type="InterPro" id="IPR013113">
    <property type="entry name" value="FAD-bd_9_SIP"/>
</dbReference>
<dbReference type="InterPro" id="IPR017927">
    <property type="entry name" value="FAD-bd_FR_type"/>
</dbReference>
<dbReference type="InterPro" id="IPR039261">
    <property type="entry name" value="FNR_nucleotide-bd"/>
</dbReference>
<dbReference type="InterPro" id="IPR017938">
    <property type="entry name" value="Riboflavin_synthase-like_b-brl"/>
</dbReference>
<dbReference type="InterPro" id="IPR007037">
    <property type="entry name" value="SIP_C"/>
</dbReference>
<dbReference type="InterPro" id="IPR039374">
    <property type="entry name" value="SIP_fam"/>
</dbReference>
<dbReference type="PANTHER" id="PTHR30157">
    <property type="entry name" value="FERRIC REDUCTASE, NADPH-DEPENDENT"/>
    <property type="match status" value="1"/>
</dbReference>
<dbReference type="PANTHER" id="PTHR30157:SF0">
    <property type="entry name" value="NADPH-DEPENDENT FERRIC-CHELATE REDUCTASE"/>
    <property type="match status" value="1"/>
</dbReference>
<dbReference type="Pfam" id="PF08021">
    <property type="entry name" value="FAD_binding_9"/>
    <property type="match status" value="1"/>
</dbReference>
<dbReference type="Pfam" id="PF04954">
    <property type="entry name" value="SIP"/>
    <property type="match status" value="1"/>
</dbReference>
<dbReference type="SUPFAM" id="SSF63380">
    <property type="entry name" value="Riboflavin synthase domain-like"/>
    <property type="match status" value="1"/>
</dbReference>
<dbReference type="PROSITE" id="PS51384">
    <property type="entry name" value="FAD_FR"/>
    <property type="match status" value="1"/>
</dbReference>
<evidence type="ECO:0000255" key="1">
    <source>
        <dbReference type="PROSITE-ProRule" id="PRU00716"/>
    </source>
</evidence>
<evidence type="ECO:0000269" key="2">
    <source>
    </source>
</evidence>
<evidence type="ECO:0000269" key="3">
    <source>
    </source>
</evidence>
<evidence type="ECO:0000303" key="4">
    <source>
    </source>
</evidence>
<evidence type="ECO:0000303" key="5">
    <source>
    </source>
</evidence>
<evidence type="ECO:0000305" key="6"/>
<evidence type="ECO:0000312" key="7">
    <source>
        <dbReference type="EMBL" id="ABI72237.1"/>
    </source>
</evidence>
<evidence type="ECO:0007744" key="8">
    <source>
        <dbReference type="PDB" id="6GEH"/>
    </source>
</evidence>
<feature type="chain" id="PRO_0000462157" description="Ferric siderophore reductase">
    <location>
        <begin position="1"/>
        <end position="264"/>
    </location>
</feature>
<feature type="domain" description="FAD-binding FR-type" evidence="1">
    <location>
        <begin position="9"/>
        <end position="127"/>
    </location>
</feature>
<feature type="binding site" evidence="3 8">
    <location>
        <position position="73"/>
    </location>
    <ligand>
        <name>FAD</name>
        <dbReference type="ChEBI" id="CHEBI:57692"/>
    </ligand>
</feature>
<feature type="binding site" evidence="3 8">
    <location>
        <position position="74"/>
    </location>
    <ligand>
        <name>FAD</name>
        <dbReference type="ChEBI" id="CHEBI:57692"/>
    </ligand>
</feature>
<feature type="binding site" evidence="3 8">
    <location>
        <position position="76"/>
    </location>
    <ligand>
        <name>FAD</name>
        <dbReference type="ChEBI" id="CHEBI:57692"/>
    </ligand>
</feature>
<feature type="binding site" evidence="3 8">
    <location>
        <position position="90"/>
    </location>
    <ligand>
        <name>FAD</name>
        <dbReference type="ChEBI" id="CHEBI:57692"/>
    </ligand>
</feature>
<feature type="binding site" evidence="3 8">
    <location>
        <position position="92"/>
    </location>
    <ligand>
        <name>FAD</name>
        <dbReference type="ChEBI" id="CHEBI:57692"/>
    </ligand>
</feature>
<feature type="binding site" evidence="3 8">
    <location>
        <position position="96"/>
    </location>
    <ligand>
        <name>FAD</name>
        <dbReference type="ChEBI" id="CHEBI:57692"/>
    </ligand>
</feature>
<feature type="binding site" evidence="3 8">
    <location>
        <position position="100"/>
    </location>
    <ligand>
        <name>FAD</name>
        <dbReference type="ChEBI" id="CHEBI:57692"/>
    </ligand>
</feature>
<feature type="binding site" evidence="3 8">
    <location>
        <position position="101"/>
    </location>
    <ligand>
        <name>FAD</name>
        <dbReference type="ChEBI" id="CHEBI:57692"/>
    </ligand>
</feature>
<feature type="binding site" evidence="3 8">
    <location>
        <position position="247"/>
    </location>
    <ligand>
        <name>FAD</name>
        <dbReference type="ChEBI" id="CHEBI:57692"/>
    </ligand>
</feature>
<feature type="binding site" evidence="3 8">
    <location>
        <position position="249"/>
    </location>
    <ligand>
        <name>FAD</name>
        <dbReference type="ChEBI" id="CHEBI:57692"/>
    </ligand>
</feature>
<feature type="binding site" evidence="3 8">
    <location>
        <position position="250"/>
    </location>
    <ligand>
        <name>FAD</name>
        <dbReference type="ChEBI" id="CHEBI:57692"/>
    </ligand>
</feature>
<feature type="binding site" evidence="3 8">
    <location>
        <position position="252"/>
    </location>
    <ligand>
        <name>FAD</name>
        <dbReference type="ChEBI" id="CHEBI:57692"/>
    </ligand>
</feature>
<comment type="function">
    <text evidence="3">Ferric-siderophore reductase involved in iron removal from the siderophores after their transport into the cell (PubMed:30420426). Catalyzes the reduction of the ferric iron bound to the hydroxamate siderophores produced by Shewanella to ferrous iron (PubMed:30420426). Can use a ferredoxin as electron donor (PubMed:30420426). Despite the clear evidence for the interaction with NAD(P)H, no direct reduction of the enzyme by these compounds is observed, nor consumption of NAD(P)H, suggesting that NADH and NADPH are not the physiological electron donors (PubMed:30420426).</text>
</comment>
<comment type="cofactor">
    <cofactor evidence="2 3">
        <name>FAD</name>
        <dbReference type="ChEBI" id="CHEBI:57692"/>
    </cofactor>
</comment>
<comment type="similarity">
    <text evidence="6">Belongs to the SIP oxidoreductase family.</text>
</comment>
<name>SFSIP_SHEFN</name>
<reference evidence="7" key="1">
    <citation type="submission" date="2006-08" db="EMBL/GenBank/DDBJ databases">
        <title>Complete sequence of Shewanella frigidimarina NCIMB 400.</title>
        <authorList>
            <consortium name="US DOE Joint Genome Institute"/>
            <person name="Copeland A."/>
            <person name="Lucas S."/>
            <person name="Lapidus A."/>
            <person name="Barry K."/>
            <person name="Detter J.C."/>
            <person name="Glavina del Rio T."/>
            <person name="Hammon N."/>
            <person name="Israni S."/>
            <person name="Dalin E."/>
            <person name="Tice H."/>
            <person name="Pitluck S."/>
            <person name="Fredrickson J.K."/>
            <person name="Kolker E."/>
            <person name="McCuel L.A."/>
            <person name="DiChristina T."/>
            <person name="Nealson K.H."/>
            <person name="Newman D."/>
            <person name="Tiedje J.M."/>
            <person name="Zhou J."/>
            <person name="Romine M.F."/>
            <person name="Culley D.E."/>
            <person name="Serres M."/>
            <person name="Chertkov O."/>
            <person name="Brettin T."/>
            <person name="Bruce D."/>
            <person name="Han C."/>
            <person name="Tapia R."/>
            <person name="Gilna P."/>
            <person name="Schmutz J."/>
            <person name="Larimer F."/>
            <person name="Land M."/>
            <person name="Hauser L."/>
            <person name="Kyrpides N."/>
            <person name="Mikhailova N."/>
            <person name="Richardson P."/>
        </authorList>
    </citation>
    <scope>NUCLEOTIDE SEQUENCE [LARGE SCALE GENOMIC DNA]</scope>
    <source>
        <strain>NCIMB 400</strain>
    </source>
</reference>
<reference key="2">
    <citation type="journal article" date="2016" name="Acta Crystallogr. F Struct. Biol. Commun.">
        <title>A putative siderophore-interacting protein from the marine bacterium Shewanella frigidimarina NCIMB 400: cloning, expression, purification, crystallization and X-ray diffraction analysis.</title>
        <authorList>
            <person name="Trindade I.B."/>
            <person name="Fonseca B.M."/>
            <person name="Matias P.M."/>
            <person name="Louro R.O."/>
            <person name="Moe E."/>
        </authorList>
    </citation>
    <scope>COFACTOR</scope>
    <scope>CRYSTALLIZATION</scope>
    <source>
        <strain>NCIMB 400</strain>
    </source>
</reference>
<reference evidence="8" key="3">
    <citation type="journal article" date="2019" name="J. Biol. Chem.">
        <title>Structure and reactivity of a siderophore-interacting protein from the marine bacterium Shewanella reveals unanticipated functional versatility.</title>
        <authorList>
            <person name="Trindade I.B."/>
            <person name="Silva J.M."/>
            <person name="Fonseca B.M."/>
            <person name="Catarino T."/>
            <person name="Fujita M."/>
            <person name="Matias P.M."/>
            <person name="Moe E."/>
            <person name="Louro R.O."/>
        </authorList>
    </citation>
    <scope>X-RAY CRYSTALLOGRAPHY (1.15 ANGSTROMS) OF 9-264 IN COMPLEX WITH FAD</scope>
    <scope>FUNCTION AS A REDUCTASE</scope>
    <scope>COFACTOR</scope>
    <source>
        <strain>NCIMB 400</strain>
    </source>
</reference>
<organism>
    <name type="scientific">Shewanella frigidimarina (strain NCIMB 400)</name>
    <dbReference type="NCBI Taxonomy" id="318167"/>
    <lineage>
        <taxon>Bacteria</taxon>
        <taxon>Pseudomonadati</taxon>
        <taxon>Pseudomonadota</taxon>
        <taxon>Gammaproteobacteria</taxon>
        <taxon>Alteromonadales</taxon>
        <taxon>Shewanellaceae</taxon>
        <taxon>Shewanella</taxon>
    </lineage>
</organism>
<accession>Q080S8</accession>
<keyword id="KW-0002">3D-structure</keyword>
<keyword id="KW-0274">FAD</keyword>
<keyword id="KW-0285">Flavoprotein</keyword>
<keyword id="KW-0547">Nucleotide-binding</keyword>
<keyword id="KW-0560">Oxidoreductase</keyword>
<keyword id="KW-1185">Reference proteome</keyword>
<sequence length="264" mass="29382">MNNQSAKKSPTRLTYISDIIEISPYLRRLVLSGEQLANFPADQQGAYVKVLIPQPGETTVNMTLTGPNAAIKRSYTIREFDPVRGQLSLDFVINKHTGPATDWAKLANVGDTVAIAGPGPLKMNRFDFNDYLLFGDSTSINAVDALIKRLPATAKGHIIMLVNSHQEQALLSQHPLLKTHWLVLNDSITAEQQIDWLLDKLELFGDLPAVTQVFVGLEATQVRVIKQYLLEQQQLPLSSISATGYWKRNTDADTFGKQKQMQPL</sequence>
<gene>
    <name evidence="7" type="ordered locus">Sfri_2392</name>
</gene>